<feature type="chain" id="PRO_0000163933" description="tRNA dimethylallyltransferase">
    <location>
        <begin position="1"/>
        <end position="313"/>
    </location>
</feature>
<feature type="region of interest" description="Interaction with substrate tRNA" evidence="1">
    <location>
        <begin position="35"/>
        <end position="38"/>
    </location>
</feature>
<feature type="region of interest" description="Interaction with substrate tRNA" evidence="1">
    <location>
        <begin position="159"/>
        <end position="163"/>
    </location>
</feature>
<feature type="region of interest" description="Interaction with substrate tRNA" evidence="1">
    <location>
        <begin position="240"/>
        <end position="245"/>
    </location>
</feature>
<feature type="binding site" evidence="1">
    <location>
        <begin position="10"/>
        <end position="17"/>
    </location>
    <ligand>
        <name>ATP</name>
        <dbReference type="ChEBI" id="CHEBI:30616"/>
    </ligand>
</feature>
<feature type="binding site" evidence="1">
    <location>
        <begin position="12"/>
        <end position="17"/>
    </location>
    <ligand>
        <name>substrate</name>
    </ligand>
</feature>
<feature type="site" description="Interaction with substrate tRNA" evidence="1">
    <location>
        <position position="101"/>
    </location>
</feature>
<feature type="site" description="Interaction with substrate tRNA" evidence="1">
    <location>
        <position position="123"/>
    </location>
</feature>
<protein>
    <recommendedName>
        <fullName evidence="1">tRNA dimethylallyltransferase</fullName>
        <ecNumber evidence="1">2.5.1.75</ecNumber>
    </recommendedName>
    <alternativeName>
        <fullName evidence="1">Dimethylallyl diphosphate:tRNA dimethylallyltransferase</fullName>
        <shortName evidence="1">DMAPP:tRNA dimethylallyltransferase</shortName>
        <shortName evidence="1">DMATase</shortName>
    </alternativeName>
    <alternativeName>
        <fullName evidence="1">Isopentenyl-diphosphate:tRNA isopentenyltransferase</fullName>
        <shortName evidence="1">IPP transferase</shortName>
        <shortName evidence="1">IPPT</shortName>
        <shortName evidence="1">IPTase</shortName>
    </alternativeName>
</protein>
<accession>Q5WTA1</accession>
<dbReference type="EC" id="2.5.1.75" evidence="1"/>
<dbReference type="EMBL" id="CR628337">
    <property type="protein sequence ID" value="CAH16865.1"/>
    <property type="molecule type" value="Genomic_DNA"/>
</dbReference>
<dbReference type="RefSeq" id="WP_011216567.1">
    <property type="nucleotide sequence ID" value="NC_006369.1"/>
</dbReference>
<dbReference type="SMR" id="Q5WTA1"/>
<dbReference type="KEGG" id="lpf:lpl2624"/>
<dbReference type="LegioList" id="lpl2624"/>
<dbReference type="HOGENOM" id="CLU_032616_0_0_6"/>
<dbReference type="Proteomes" id="UP000002517">
    <property type="component" value="Chromosome"/>
</dbReference>
<dbReference type="GO" id="GO:0005524">
    <property type="term" value="F:ATP binding"/>
    <property type="evidence" value="ECO:0007669"/>
    <property type="project" value="UniProtKB-UniRule"/>
</dbReference>
<dbReference type="GO" id="GO:0052381">
    <property type="term" value="F:tRNA dimethylallyltransferase activity"/>
    <property type="evidence" value="ECO:0007669"/>
    <property type="project" value="UniProtKB-UniRule"/>
</dbReference>
<dbReference type="GO" id="GO:0006400">
    <property type="term" value="P:tRNA modification"/>
    <property type="evidence" value="ECO:0007669"/>
    <property type="project" value="TreeGrafter"/>
</dbReference>
<dbReference type="FunFam" id="1.10.20.140:FF:000001">
    <property type="entry name" value="tRNA dimethylallyltransferase"/>
    <property type="match status" value="1"/>
</dbReference>
<dbReference type="Gene3D" id="1.10.20.140">
    <property type="match status" value="1"/>
</dbReference>
<dbReference type="Gene3D" id="3.40.50.300">
    <property type="entry name" value="P-loop containing nucleotide triphosphate hydrolases"/>
    <property type="match status" value="1"/>
</dbReference>
<dbReference type="HAMAP" id="MF_00185">
    <property type="entry name" value="IPP_trans"/>
    <property type="match status" value="1"/>
</dbReference>
<dbReference type="InterPro" id="IPR039657">
    <property type="entry name" value="Dimethylallyltransferase"/>
</dbReference>
<dbReference type="InterPro" id="IPR018022">
    <property type="entry name" value="IPT"/>
</dbReference>
<dbReference type="InterPro" id="IPR027417">
    <property type="entry name" value="P-loop_NTPase"/>
</dbReference>
<dbReference type="NCBIfam" id="TIGR00174">
    <property type="entry name" value="miaA"/>
    <property type="match status" value="1"/>
</dbReference>
<dbReference type="PANTHER" id="PTHR11088">
    <property type="entry name" value="TRNA DIMETHYLALLYLTRANSFERASE"/>
    <property type="match status" value="1"/>
</dbReference>
<dbReference type="PANTHER" id="PTHR11088:SF60">
    <property type="entry name" value="TRNA DIMETHYLALLYLTRANSFERASE"/>
    <property type="match status" value="1"/>
</dbReference>
<dbReference type="Pfam" id="PF01715">
    <property type="entry name" value="IPPT"/>
    <property type="match status" value="1"/>
</dbReference>
<dbReference type="SUPFAM" id="SSF52540">
    <property type="entry name" value="P-loop containing nucleoside triphosphate hydrolases"/>
    <property type="match status" value="2"/>
</dbReference>
<name>MIAA_LEGPL</name>
<gene>
    <name evidence="1" type="primary">miaA</name>
    <name type="ordered locus">lpl2624</name>
</gene>
<organism>
    <name type="scientific">Legionella pneumophila (strain Lens)</name>
    <dbReference type="NCBI Taxonomy" id="297245"/>
    <lineage>
        <taxon>Bacteria</taxon>
        <taxon>Pseudomonadati</taxon>
        <taxon>Pseudomonadota</taxon>
        <taxon>Gammaproteobacteria</taxon>
        <taxon>Legionellales</taxon>
        <taxon>Legionellaceae</taxon>
        <taxon>Legionella</taxon>
    </lineage>
</organism>
<keyword id="KW-0067">ATP-binding</keyword>
<keyword id="KW-0460">Magnesium</keyword>
<keyword id="KW-0547">Nucleotide-binding</keyword>
<keyword id="KW-0808">Transferase</keyword>
<keyword id="KW-0819">tRNA processing</keyword>
<proteinExistence type="inferred from homology"/>
<comment type="function">
    <text evidence="1">Catalyzes the transfer of a dimethylallyl group onto the adenine at position 37 in tRNAs that read codons beginning with uridine, leading to the formation of N6-(dimethylallyl)adenosine (i(6)A).</text>
</comment>
<comment type="catalytic activity">
    <reaction evidence="1">
        <text>adenosine(37) in tRNA + dimethylallyl diphosphate = N(6)-dimethylallyladenosine(37) in tRNA + diphosphate</text>
        <dbReference type="Rhea" id="RHEA:26482"/>
        <dbReference type="Rhea" id="RHEA-COMP:10162"/>
        <dbReference type="Rhea" id="RHEA-COMP:10375"/>
        <dbReference type="ChEBI" id="CHEBI:33019"/>
        <dbReference type="ChEBI" id="CHEBI:57623"/>
        <dbReference type="ChEBI" id="CHEBI:74411"/>
        <dbReference type="ChEBI" id="CHEBI:74415"/>
        <dbReference type="EC" id="2.5.1.75"/>
    </reaction>
</comment>
<comment type="cofactor">
    <cofactor evidence="1">
        <name>Mg(2+)</name>
        <dbReference type="ChEBI" id="CHEBI:18420"/>
    </cofactor>
</comment>
<comment type="subunit">
    <text evidence="1">Monomer.</text>
</comment>
<comment type="similarity">
    <text evidence="1">Belongs to the IPP transferase family.</text>
</comment>
<sequence>MNKLVFCLMGPTASGKTGLACELLTHFPFEIISVDSAMIYRDMNIGTAKPSIHELQSAPHYLIDIKDPVESYSAAQFCTDALSLCAAIIKRGNIPLLVGGTMMYFNALQKGLATLPEADEAVRKRLEEEALSQGWDFLYQKLSQLDPVTAARIHAHDTQRIQRALEVYYLTGSTLSTYLTGPHEQPDYCFVNLALFPEQRSWLHERIAQRFDAMLSEGFIEEVQQLQAKWPIQINLPSMRCVGYRQILEYLAGHYDYETMREKGIAATRQLAKRQLTWLRHWEGALFYDSQNVGFNTDIIAKIREILDNTVSN</sequence>
<evidence type="ECO:0000255" key="1">
    <source>
        <dbReference type="HAMAP-Rule" id="MF_00185"/>
    </source>
</evidence>
<reference key="1">
    <citation type="journal article" date="2004" name="Nat. Genet.">
        <title>Evidence in the Legionella pneumophila genome for exploitation of host cell functions and high genome plasticity.</title>
        <authorList>
            <person name="Cazalet C."/>
            <person name="Rusniok C."/>
            <person name="Brueggemann H."/>
            <person name="Zidane N."/>
            <person name="Magnier A."/>
            <person name="Ma L."/>
            <person name="Tichit M."/>
            <person name="Jarraud S."/>
            <person name="Bouchier C."/>
            <person name="Vandenesch F."/>
            <person name="Kunst F."/>
            <person name="Etienne J."/>
            <person name="Glaser P."/>
            <person name="Buchrieser C."/>
        </authorList>
    </citation>
    <scope>NUCLEOTIDE SEQUENCE [LARGE SCALE GENOMIC DNA]</scope>
    <source>
        <strain>Lens</strain>
    </source>
</reference>